<name>CNOT6_XENLA</name>
<sequence length="552" mass="62776">MPKEKYEPPDPRRMYTIMSSEEAANGKKSHWAELEISGKVRSLSSSLWSLTHLTALHLSDNSLSCIPSDIAKLHNLVYLDLSHNQIQSLPAELGNMVSLRELHLNYNQLRVLPFELGKLFQLQTLSLKGNPLTQDILNLCLEPDGTRRLLNYLLDNLSVSTEQPPPRSWIMLQEPDRTRPTALFSVMCYNVLCDKYATRQLYGYCPSWALNWDYRKKAIIQEILSCNADIISLQEVETEQYYSFFLVELKERGYNGFFSPKSRARTMSEQERKHVDGCAIFFKTEKFTLVQKHTVEFNQLAMANSEGSEAMLNRVMTKDNIGVAVLLELRKELIEMSSGKPHLGTEKQLILVANAHMHWDPEYSDVKLVQTMMFLSEVKNIIDKASRSLKSSVLGECGTIPLVLCADLNSLPDSGVVEYLSTGGVETNHKDFKELRYNESLTNFSCNGKNGMTNGRITHGFKLKSAYENGLMPYTNYTFDFKGIIDYIFYSKPQLNTLAILGPLDHHWLVENNISGCPHPLIPSDHFSLFAQLELLLPFLPQVNGIHLPGRR</sequence>
<keyword id="KW-0010">Activator</keyword>
<keyword id="KW-0963">Cytoplasm</keyword>
<keyword id="KW-0269">Exonuclease</keyword>
<keyword id="KW-0378">Hydrolase</keyword>
<keyword id="KW-0433">Leucine-rich repeat</keyword>
<keyword id="KW-0460">Magnesium</keyword>
<keyword id="KW-0479">Metal-binding</keyword>
<keyword id="KW-0540">Nuclease</keyword>
<keyword id="KW-0539">Nucleus</keyword>
<keyword id="KW-1185">Reference proteome</keyword>
<keyword id="KW-0677">Repeat</keyword>
<keyword id="KW-0694">RNA-binding</keyword>
<keyword id="KW-0943">RNA-mediated gene silencing</keyword>
<keyword id="KW-0804">Transcription</keyword>
<keyword id="KW-0805">Transcription regulation</keyword>
<keyword id="KW-0810">Translation regulation</keyword>
<proteinExistence type="evidence at protein level"/>
<evidence type="ECO:0000250" key="1"/>
<evidence type="ECO:0000250" key="2">
    <source>
        <dbReference type="UniProtKB" id="Q96LI5"/>
    </source>
</evidence>
<evidence type="ECO:0000250" key="3">
    <source>
        <dbReference type="UniProtKB" id="Q9ULM6"/>
    </source>
</evidence>
<evidence type="ECO:0000269" key="4">
    <source>
    </source>
</evidence>
<evidence type="ECO:0000305" key="5"/>
<organism>
    <name type="scientific">Xenopus laevis</name>
    <name type="common">African clawed frog</name>
    <dbReference type="NCBI Taxonomy" id="8355"/>
    <lineage>
        <taxon>Eukaryota</taxon>
        <taxon>Metazoa</taxon>
        <taxon>Chordata</taxon>
        <taxon>Craniata</taxon>
        <taxon>Vertebrata</taxon>
        <taxon>Euteleostomi</taxon>
        <taxon>Amphibia</taxon>
        <taxon>Batrachia</taxon>
        <taxon>Anura</taxon>
        <taxon>Pipoidea</taxon>
        <taxon>Pipidae</taxon>
        <taxon>Xenopodinae</taxon>
        <taxon>Xenopus</taxon>
        <taxon>Xenopus</taxon>
    </lineage>
</organism>
<gene>
    <name type="primary">cnot6</name>
</gene>
<accession>Q5BJ41</accession>
<dbReference type="EC" id="3.1.13.4" evidence="4"/>
<dbReference type="EMBL" id="BC091632">
    <property type="protein sequence ID" value="AAH91632.1"/>
    <property type="molecule type" value="mRNA"/>
</dbReference>
<dbReference type="RefSeq" id="NP_001184194.1">
    <property type="nucleotide sequence ID" value="NM_001197265.1"/>
</dbReference>
<dbReference type="SMR" id="Q5BJ41"/>
<dbReference type="Proteomes" id="UP000186698">
    <property type="component" value="Unplaced"/>
</dbReference>
<dbReference type="GO" id="GO:0030014">
    <property type="term" value="C:CCR4-NOT complex"/>
    <property type="evidence" value="ECO:0000250"/>
    <property type="project" value="UniProtKB"/>
</dbReference>
<dbReference type="GO" id="GO:0005737">
    <property type="term" value="C:cytoplasm"/>
    <property type="evidence" value="ECO:0007669"/>
    <property type="project" value="UniProtKB-SubCell"/>
</dbReference>
<dbReference type="GO" id="GO:0005634">
    <property type="term" value="C:nucleus"/>
    <property type="evidence" value="ECO:0007669"/>
    <property type="project" value="UniProtKB-SubCell"/>
</dbReference>
<dbReference type="GO" id="GO:0000175">
    <property type="term" value="F:3'-5'-RNA exonuclease activity"/>
    <property type="evidence" value="ECO:0000318"/>
    <property type="project" value="GO_Central"/>
</dbReference>
<dbReference type="GO" id="GO:0046872">
    <property type="term" value="F:metal ion binding"/>
    <property type="evidence" value="ECO:0007669"/>
    <property type="project" value="UniProtKB-KW"/>
</dbReference>
<dbReference type="GO" id="GO:0004535">
    <property type="term" value="F:poly(A)-specific ribonuclease activity"/>
    <property type="evidence" value="ECO:0000250"/>
    <property type="project" value="UniProtKB"/>
</dbReference>
<dbReference type="GO" id="GO:0003723">
    <property type="term" value="F:RNA binding"/>
    <property type="evidence" value="ECO:0007669"/>
    <property type="project" value="UniProtKB-KW"/>
</dbReference>
<dbReference type="GO" id="GO:0004532">
    <property type="term" value="F:RNA exonuclease activity"/>
    <property type="evidence" value="ECO:0000250"/>
    <property type="project" value="UniProtKB"/>
</dbReference>
<dbReference type="GO" id="GO:0003713">
    <property type="term" value="F:transcription coactivator activity"/>
    <property type="evidence" value="ECO:0000250"/>
    <property type="project" value="UniProtKB"/>
</dbReference>
<dbReference type="GO" id="GO:0035279">
    <property type="term" value="P:miRNA-mediated gene silencing by mRNA destabilization"/>
    <property type="evidence" value="ECO:0000250"/>
    <property type="project" value="UniProtKB"/>
</dbReference>
<dbReference type="GO" id="GO:0070966">
    <property type="term" value="P:nuclear-transcribed mRNA catabolic process, no-go decay"/>
    <property type="evidence" value="ECO:0000250"/>
    <property type="project" value="UniProtKB"/>
</dbReference>
<dbReference type="GO" id="GO:0000289">
    <property type="term" value="P:nuclear-transcribed mRNA poly(A) tail shortening"/>
    <property type="evidence" value="ECO:0000250"/>
    <property type="project" value="UniProtKB"/>
</dbReference>
<dbReference type="GO" id="GO:0006417">
    <property type="term" value="P:regulation of translation"/>
    <property type="evidence" value="ECO:0007669"/>
    <property type="project" value="UniProtKB-KW"/>
</dbReference>
<dbReference type="FunFam" id="3.60.10.10:FF:000002">
    <property type="entry name" value="CCR4-NOT transcription complex subunit 6 like"/>
    <property type="match status" value="1"/>
</dbReference>
<dbReference type="FunFam" id="3.80.10.10:FF:000008">
    <property type="entry name" value="CCR4-NOT transcription complex subunit 6 like"/>
    <property type="match status" value="1"/>
</dbReference>
<dbReference type="Gene3D" id="3.60.10.10">
    <property type="entry name" value="Endonuclease/exonuclease/phosphatase"/>
    <property type="match status" value="1"/>
</dbReference>
<dbReference type="Gene3D" id="3.80.10.10">
    <property type="entry name" value="Ribonuclease Inhibitor"/>
    <property type="match status" value="1"/>
</dbReference>
<dbReference type="InterPro" id="IPR050410">
    <property type="entry name" value="CCR4/nocturin_mRNA_transcr"/>
</dbReference>
<dbReference type="InterPro" id="IPR036691">
    <property type="entry name" value="Endo/exonu/phosph_ase_sf"/>
</dbReference>
<dbReference type="InterPro" id="IPR005135">
    <property type="entry name" value="Endo/exonuclease/phosphatase"/>
</dbReference>
<dbReference type="InterPro" id="IPR001611">
    <property type="entry name" value="Leu-rich_rpt"/>
</dbReference>
<dbReference type="InterPro" id="IPR003591">
    <property type="entry name" value="Leu-rich_rpt_typical-subtyp"/>
</dbReference>
<dbReference type="InterPro" id="IPR032675">
    <property type="entry name" value="LRR_dom_sf"/>
</dbReference>
<dbReference type="PANTHER" id="PTHR12121">
    <property type="entry name" value="CARBON CATABOLITE REPRESSOR PROTEIN 4"/>
    <property type="match status" value="1"/>
</dbReference>
<dbReference type="PANTHER" id="PTHR12121:SF33">
    <property type="entry name" value="CCR4-NOT TRANSCRIPTION COMPLEX SUBUNIT 6"/>
    <property type="match status" value="1"/>
</dbReference>
<dbReference type="Pfam" id="PF03372">
    <property type="entry name" value="Exo_endo_phos"/>
    <property type="match status" value="1"/>
</dbReference>
<dbReference type="Pfam" id="PF13855">
    <property type="entry name" value="LRR_8"/>
    <property type="match status" value="1"/>
</dbReference>
<dbReference type="SMART" id="SM00369">
    <property type="entry name" value="LRR_TYP"/>
    <property type="match status" value="3"/>
</dbReference>
<dbReference type="SUPFAM" id="SSF56219">
    <property type="entry name" value="DNase I-like"/>
    <property type="match status" value="1"/>
</dbReference>
<dbReference type="SUPFAM" id="SSF52058">
    <property type="entry name" value="L domain-like"/>
    <property type="match status" value="1"/>
</dbReference>
<dbReference type="PROSITE" id="PS51450">
    <property type="entry name" value="LRR"/>
    <property type="match status" value="4"/>
</dbReference>
<comment type="function">
    <text evidence="3 4">Poly(A) nuclease involved in mRNA decay. Has 3'-5' RNase activity (PubMed:20634287). The CCR4-NOT complex functions as a general transcription regulation complex (By similarity). Enhances ligand-dependent transcriptional activity of nuclear hormone receptors (By similarity).</text>
</comment>
<comment type="catalytic activity">
    <reaction evidence="4">
        <text>Exonucleolytic cleavage of poly(A) to 5'-AMP.</text>
        <dbReference type="EC" id="3.1.13.4"/>
    </reaction>
</comment>
<comment type="cofactor">
    <cofactor evidence="2">
        <name>Mg(2+)</name>
        <dbReference type="ChEBI" id="CHEBI:18420"/>
    </cofactor>
    <text evidence="2">Binds 2 magnesium ions, but the ions interact each with only 1 or 2 residues.</text>
</comment>
<comment type="subunit">
    <text evidence="3">Subunit of the CCR4-NOT core complex.</text>
</comment>
<comment type="subcellular location">
    <subcellularLocation>
        <location evidence="2">Cytoplasm</location>
    </subcellularLocation>
    <subcellularLocation>
        <location evidence="2">Nucleus</location>
    </subcellularLocation>
    <text evidence="2">Predominantly cytoplasmic.</text>
</comment>
<comment type="similarity">
    <text evidence="5">Belongs to the CCR4/nocturin family.</text>
</comment>
<protein>
    <recommendedName>
        <fullName>CCR4-NOT transcription complex subunit 6</fullName>
        <ecNumber evidence="4">3.1.13.4</ecNumber>
    </recommendedName>
    <alternativeName>
        <fullName>Cytoplasmic deadenylase</fullName>
    </alternativeName>
</protein>
<feature type="chain" id="PRO_0000218576" description="CCR4-NOT transcription complex subunit 6">
    <location>
        <begin position="1"/>
        <end position="552"/>
    </location>
</feature>
<feature type="repeat" description="LRR 1">
    <location>
        <begin position="52"/>
        <end position="73"/>
    </location>
</feature>
<feature type="repeat" description="LRR 2">
    <location>
        <begin position="75"/>
        <end position="96"/>
    </location>
</feature>
<feature type="repeat" description="LRR 3">
    <location>
        <begin position="98"/>
        <end position="120"/>
    </location>
</feature>
<feature type="repeat" description="LRR 4">
    <location>
        <begin position="121"/>
        <end position="143"/>
    </location>
</feature>
<feature type="region of interest" description="Nuclease domain" evidence="1">
    <location>
        <begin position="153"/>
        <end position="552"/>
    </location>
</feature>
<feature type="active site" description="Proton donor/acceptor" evidence="2">
    <location>
        <position position="407"/>
    </location>
</feature>
<feature type="binding site" evidence="2">
    <location>
        <position position="235"/>
    </location>
    <ligand>
        <name>Mg(2+)</name>
        <dbReference type="ChEBI" id="CHEBI:18420"/>
        <label>1</label>
    </ligand>
</feature>
<feature type="binding site" evidence="2">
    <location>
        <position position="235"/>
    </location>
    <ligand>
        <name>substrate</name>
    </ligand>
</feature>
<feature type="binding site" evidence="2">
    <location>
        <position position="271"/>
    </location>
    <ligand>
        <name>substrate</name>
    </ligand>
</feature>
<feature type="binding site" evidence="2">
    <location>
        <position position="356"/>
    </location>
    <ligand>
        <name>substrate</name>
    </ligand>
</feature>
<feature type="binding site" evidence="2">
    <location>
        <position position="361"/>
    </location>
    <ligand>
        <name>substrate</name>
    </ligand>
</feature>
<feature type="binding site" evidence="2">
    <location>
        <position position="407"/>
    </location>
    <ligand>
        <name>Mg(2+)</name>
        <dbReference type="ChEBI" id="CHEBI:18420"/>
        <label>2</label>
    </ligand>
</feature>
<feature type="binding site" evidence="2">
    <location>
        <position position="409"/>
    </location>
    <ligand>
        <name>substrate</name>
    </ligand>
</feature>
<feature type="binding site" evidence="2">
    <location>
        <position position="476"/>
    </location>
    <ligand>
        <name>substrate</name>
    </ligand>
</feature>
<feature type="binding site" evidence="2">
    <location>
        <position position="481"/>
    </location>
    <ligand>
        <name>substrate</name>
    </ligand>
</feature>
<reference key="1">
    <citation type="submission" date="2005-03" db="EMBL/GenBank/DDBJ databases">
        <authorList>
            <consortium name="NIH - Xenopus Gene Collection (XGC) project"/>
        </authorList>
    </citation>
    <scope>NUCLEOTIDE SEQUENCE [LARGE SCALE MRNA]</scope>
    <source>
        <tissue>Embryo</tissue>
    </source>
</reference>
<reference key="2">
    <citation type="journal article" date="2010" name="J. Biol. Chem.">
        <title>Translational repression by deadenylases.</title>
        <authorList>
            <person name="Cooke A."/>
            <person name="Prigge A."/>
            <person name="Wickens M."/>
        </authorList>
    </citation>
    <scope>FUNCTION</scope>
    <scope>CATALYTIC ACTIVITY</scope>
</reference>